<proteinExistence type="inferred from homology"/>
<name>TGT_SHEB9</name>
<keyword id="KW-0328">Glycosyltransferase</keyword>
<keyword id="KW-0479">Metal-binding</keyword>
<keyword id="KW-0671">Queuosine biosynthesis</keyword>
<keyword id="KW-0808">Transferase</keyword>
<keyword id="KW-0819">tRNA processing</keyword>
<keyword id="KW-0862">Zinc</keyword>
<feature type="chain" id="PRO_1000077017" description="Queuine tRNA-ribosyltransferase">
    <location>
        <begin position="1"/>
        <end position="374"/>
    </location>
</feature>
<feature type="region of interest" description="RNA binding" evidence="1">
    <location>
        <begin position="245"/>
        <end position="251"/>
    </location>
</feature>
<feature type="region of interest" description="RNA binding; important for wobble base 34 recognition" evidence="1">
    <location>
        <begin position="269"/>
        <end position="273"/>
    </location>
</feature>
<feature type="active site" description="Proton acceptor" evidence="1">
    <location>
        <position position="89"/>
    </location>
</feature>
<feature type="active site" description="Nucleophile" evidence="1">
    <location>
        <position position="264"/>
    </location>
</feature>
<feature type="binding site" evidence="1">
    <location>
        <begin position="89"/>
        <end position="93"/>
    </location>
    <ligand>
        <name>substrate</name>
    </ligand>
</feature>
<feature type="binding site" evidence="1">
    <location>
        <position position="143"/>
    </location>
    <ligand>
        <name>substrate</name>
    </ligand>
</feature>
<feature type="binding site" evidence="1">
    <location>
        <position position="187"/>
    </location>
    <ligand>
        <name>substrate</name>
    </ligand>
</feature>
<feature type="binding site" evidence="1">
    <location>
        <position position="214"/>
    </location>
    <ligand>
        <name>substrate</name>
    </ligand>
</feature>
<feature type="binding site" evidence="1">
    <location>
        <position position="302"/>
    </location>
    <ligand>
        <name>Zn(2+)</name>
        <dbReference type="ChEBI" id="CHEBI:29105"/>
    </ligand>
</feature>
<feature type="binding site" evidence="1">
    <location>
        <position position="304"/>
    </location>
    <ligand>
        <name>Zn(2+)</name>
        <dbReference type="ChEBI" id="CHEBI:29105"/>
    </ligand>
</feature>
<feature type="binding site" evidence="1">
    <location>
        <position position="307"/>
    </location>
    <ligand>
        <name>Zn(2+)</name>
        <dbReference type="ChEBI" id="CHEBI:29105"/>
    </ligand>
</feature>
<feature type="binding site" evidence="1">
    <location>
        <position position="333"/>
    </location>
    <ligand>
        <name>Zn(2+)</name>
        <dbReference type="ChEBI" id="CHEBI:29105"/>
    </ligand>
</feature>
<reference key="1">
    <citation type="submission" date="2007-11" db="EMBL/GenBank/DDBJ databases">
        <title>Complete sequence of chromosome of Shewanella baltica OS195.</title>
        <authorList>
            <consortium name="US DOE Joint Genome Institute"/>
            <person name="Copeland A."/>
            <person name="Lucas S."/>
            <person name="Lapidus A."/>
            <person name="Barry K."/>
            <person name="Glavina del Rio T."/>
            <person name="Dalin E."/>
            <person name="Tice H."/>
            <person name="Pitluck S."/>
            <person name="Chain P."/>
            <person name="Malfatti S."/>
            <person name="Shin M."/>
            <person name="Vergez L."/>
            <person name="Schmutz J."/>
            <person name="Larimer F."/>
            <person name="Land M."/>
            <person name="Hauser L."/>
            <person name="Kyrpides N."/>
            <person name="Kim E."/>
            <person name="Brettar I."/>
            <person name="Rodrigues J."/>
            <person name="Konstantinidis K."/>
            <person name="Klappenbach J."/>
            <person name="Hofle M."/>
            <person name="Tiedje J."/>
            <person name="Richardson P."/>
        </authorList>
    </citation>
    <scope>NUCLEOTIDE SEQUENCE [LARGE SCALE GENOMIC DNA]</scope>
    <source>
        <strain>OS195</strain>
    </source>
</reference>
<dbReference type="EC" id="2.4.2.29" evidence="1"/>
<dbReference type="EMBL" id="CP000891">
    <property type="protein sequence ID" value="ABX50048.1"/>
    <property type="molecule type" value="Genomic_DNA"/>
</dbReference>
<dbReference type="RefSeq" id="WP_006082277.1">
    <property type="nucleotide sequence ID" value="NC_009997.1"/>
</dbReference>
<dbReference type="SMR" id="A9KUN0"/>
<dbReference type="GeneID" id="11772965"/>
<dbReference type="KEGG" id="sbn:Sbal195_2882"/>
<dbReference type="HOGENOM" id="CLU_022060_0_1_6"/>
<dbReference type="UniPathway" id="UPA00392"/>
<dbReference type="Proteomes" id="UP000000770">
    <property type="component" value="Chromosome"/>
</dbReference>
<dbReference type="GO" id="GO:0005829">
    <property type="term" value="C:cytosol"/>
    <property type="evidence" value="ECO:0007669"/>
    <property type="project" value="TreeGrafter"/>
</dbReference>
<dbReference type="GO" id="GO:0046872">
    <property type="term" value="F:metal ion binding"/>
    <property type="evidence" value="ECO:0007669"/>
    <property type="project" value="UniProtKB-KW"/>
</dbReference>
<dbReference type="GO" id="GO:0008479">
    <property type="term" value="F:tRNA-guanosine(34) queuine transglycosylase activity"/>
    <property type="evidence" value="ECO:0007669"/>
    <property type="project" value="UniProtKB-UniRule"/>
</dbReference>
<dbReference type="GO" id="GO:0008616">
    <property type="term" value="P:queuosine biosynthetic process"/>
    <property type="evidence" value="ECO:0007669"/>
    <property type="project" value="UniProtKB-UniRule"/>
</dbReference>
<dbReference type="GO" id="GO:0002099">
    <property type="term" value="P:tRNA wobble guanine modification"/>
    <property type="evidence" value="ECO:0007669"/>
    <property type="project" value="TreeGrafter"/>
</dbReference>
<dbReference type="GO" id="GO:0101030">
    <property type="term" value="P:tRNA-guanine transglycosylation"/>
    <property type="evidence" value="ECO:0007669"/>
    <property type="project" value="InterPro"/>
</dbReference>
<dbReference type="FunFam" id="3.20.20.105:FF:000001">
    <property type="entry name" value="Queuine tRNA-ribosyltransferase"/>
    <property type="match status" value="1"/>
</dbReference>
<dbReference type="Gene3D" id="3.20.20.105">
    <property type="entry name" value="Queuine tRNA-ribosyltransferase-like"/>
    <property type="match status" value="1"/>
</dbReference>
<dbReference type="HAMAP" id="MF_00168">
    <property type="entry name" value="Q_tRNA_Tgt"/>
    <property type="match status" value="1"/>
</dbReference>
<dbReference type="InterPro" id="IPR050076">
    <property type="entry name" value="ArchSynthase1/Queuine_TRR"/>
</dbReference>
<dbReference type="InterPro" id="IPR004803">
    <property type="entry name" value="TGT"/>
</dbReference>
<dbReference type="InterPro" id="IPR036511">
    <property type="entry name" value="TGT-like_sf"/>
</dbReference>
<dbReference type="InterPro" id="IPR002616">
    <property type="entry name" value="tRNA_ribo_trans-like"/>
</dbReference>
<dbReference type="NCBIfam" id="TIGR00430">
    <property type="entry name" value="Q_tRNA_tgt"/>
    <property type="match status" value="1"/>
</dbReference>
<dbReference type="NCBIfam" id="TIGR00449">
    <property type="entry name" value="tgt_general"/>
    <property type="match status" value="1"/>
</dbReference>
<dbReference type="PANTHER" id="PTHR46499">
    <property type="entry name" value="QUEUINE TRNA-RIBOSYLTRANSFERASE"/>
    <property type="match status" value="1"/>
</dbReference>
<dbReference type="PANTHER" id="PTHR46499:SF1">
    <property type="entry name" value="QUEUINE TRNA-RIBOSYLTRANSFERASE"/>
    <property type="match status" value="1"/>
</dbReference>
<dbReference type="Pfam" id="PF01702">
    <property type="entry name" value="TGT"/>
    <property type="match status" value="1"/>
</dbReference>
<dbReference type="SUPFAM" id="SSF51713">
    <property type="entry name" value="tRNA-guanine transglycosylase"/>
    <property type="match status" value="1"/>
</dbReference>
<comment type="function">
    <text evidence="1">Catalyzes the base-exchange of a guanine (G) residue with the queuine precursor 7-aminomethyl-7-deazaguanine (PreQ1) at position 34 (anticodon wobble position) in tRNAs with GU(N) anticodons (tRNA-Asp, -Asn, -His and -Tyr). Catalysis occurs through a double-displacement mechanism. The nucleophile active site attacks the C1' of nucleotide 34 to detach the guanine base from the RNA, forming a covalent enzyme-RNA intermediate. The proton acceptor active site deprotonates the incoming PreQ1, allowing a nucleophilic attack on the C1' of the ribose to form the product. After dissociation, two additional enzymatic reactions on the tRNA convert PreQ1 to queuine (Q), resulting in the hypermodified nucleoside queuosine (7-(((4,5-cis-dihydroxy-2-cyclopenten-1-yl)amino)methyl)-7-deazaguanosine).</text>
</comment>
<comment type="catalytic activity">
    <reaction evidence="1">
        <text>7-aminomethyl-7-carbaguanine + guanosine(34) in tRNA = 7-aminomethyl-7-carbaguanosine(34) in tRNA + guanine</text>
        <dbReference type="Rhea" id="RHEA:24104"/>
        <dbReference type="Rhea" id="RHEA-COMP:10341"/>
        <dbReference type="Rhea" id="RHEA-COMP:10342"/>
        <dbReference type="ChEBI" id="CHEBI:16235"/>
        <dbReference type="ChEBI" id="CHEBI:58703"/>
        <dbReference type="ChEBI" id="CHEBI:74269"/>
        <dbReference type="ChEBI" id="CHEBI:82833"/>
        <dbReference type="EC" id="2.4.2.29"/>
    </reaction>
</comment>
<comment type="cofactor">
    <cofactor evidence="1">
        <name>Zn(2+)</name>
        <dbReference type="ChEBI" id="CHEBI:29105"/>
    </cofactor>
    <text evidence="1">Binds 1 zinc ion per subunit.</text>
</comment>
<comment type="pathway">
    <text evidence="1">tRNA modification; tRNA-queuosine biosynthesis.</text>
</comment>
<comment type="subunit">
    <text evidence="1">Homodimer. Within each dimer, one monomer is responsible for RNA recognition and catalysis, while the other monomer binds to the replacement base PreQ1.</text>
</comment>
<comment type="similarity">
    <text evidence="1">Belongs to the queuine tRNA-ribosyltransferase family.</text>
</comment>
<protein>
    <recommendedName>
        <fullName evidence="1">Queuine tRNA-ribosyltransferase</fullName>
        <ecNumber evidence="1">2.4.2.29</ecNumber>
    </recommendedName>
    <alternativeName>
        <fullName evidence="1">Guanine insertion enzyme</fullName>
    </alternativeName>
    <alternativeName>
        <fullName evidence="1">tRNA-guanine transglycosylase</fullName>
    </alternativeName>
</protein>
<sequence length="374" mass="42413">MKFELDTTDGRARRGRLIFDRGTVETPAFMPVGTYGTVKGMTPEEVRATGADILLGNTFHLWLRPGEEIMRKHGDLHDFMNWQRPILTDSGGFQVFSLGDIRKITEEGVHFRSPINGEKIFLDPEKSMQIQDALGSDVVMIFDECTPYPATEDEARKSMQMSLRWARRSRDEFDRLENPNSLFGIIQGGVYEDLRDESLKGLVDIGFDGYAVGGLAVGEPKADMHRILEHICPQIPADKPRYLMGVGKPEDLVEGVRRGVDMFDCVMPTRNARNGHLFTSEGVIKIRNARHRDDTSPLDTKCDCYTCKNYSRAYLYHLDRCNEILGARLNTIHNLRYYQMLMEGLRGAIETGTLDAFVADFYTSQGREVPELVD</sequence>
<organism>
    <name type="scientific">Shewanella baltica (strain OS195)</name>
    <dbReference type="NCBI Taxonomy" id="399599"/>
    <lineage>
        <taxon>Bacteria</taxon>
        <taxon>Pseudomonadati</taxon>
        <taxon>Pseudomonadota</taxon>
        <taxon>Gammaproteobacteria</taxon>
        <taxon>Alteromonadales</taxon>
        <taxon>Shewanellaceae</taxon>
        <taxon>Shewanella</taxon>
    </lineage>
</organism>
<gene>
    <name evidence="1" type="primary">tgt</name>
    <name type="ordered locus">Sbal195_2882</name>
</gene>
<evidence type="ECO:0000255" key="1">
    <source>
        <dbReference type="HAMAP-Rule" id="MF_00168"/>
    </source>
</evidence>
<accession>A9KUN0</accession>